<protein>
    <recommendedName>
        <fullName evidence="1">3-methyl-2-oxobutanoate hydroxymethyltransferase</fullName>
        <ecNumber evidence="1">2.1.2.11</ecNumber>
    </recommendedName>
    <alternativeName>
        <fullName evidence="1">Ketopantoate hydroxymethyltransferase</fullName>
        <shortName evidence="1">KPHMT</shortName>
    </alternativeName>
</protein>
<proteinExistence type="inferred from homology"/>
<reference key="1">
    <citation type="journal article" date="2010" name="J. Bacteriol.">
        <title>Whole genome sequences of two Xylella fastidiosa strains (M12 and M23) causing almond leaf scorch disease in California.</title>
        <authorList>
            <person name="Chen J."/>
            <person name="Xie G."/>
            <person name="Han S."/>
            <person name="Chertkov O."/>
            <person name="Sims D."/>
            <person name="Civerolo E.L."/>
        </authorList>
    </citation>
    <scope>NUCLEOTIDE SEQUENCE [LARGE SCALE GENOMIC DNA]</scope>
    <source>
        <strain>M12</strain>
    </source>
</reference>
<evidence type="ECO:0000255" key="1">
    <source>
        <dbReference type="HAMAP-Rule" id="MF_00156"/>
    </source>
</evidence>
<comment type="function">
    <text evidence="1">Catalyzes the reversible reaction in which hydroxymethyl group from 5,10-methylenetetrahydrofolate is transferred onto alpha-ketoisovalerate to form ketopantoate.</text>
</comment>
<comment type="catalytic activity">
    <reaction evidence="1">
        <text>3-methyl-2-oxobutanoate + (6R)-5,10-methylene-5,6,7,8-tetrahydrofolate + H2O = 2-dehydropantoate + (6S)-5,6,7,8-tetrahydrofolate</text>
        <dbReference type="Rhea" id="RHEA:11824"/>
        <dbReference type="ChEBI" id="CHEBI:11561"/>
        <dbReference type="ChEBI" id="CHEBI:11851"/>
        <dbReference type="ChEBI" id="CHEBI:15377"/>
        <dbReference type="ChEBI" id="CHEBI:15636"/>
        <dbReference type="ChEBI" id="CHEBI:57453"/>
        <dbReference type="EC" id="2.1.2.11"/>
    </reaction>
</comment>
<comment type="cofactor">
    <cofactor evidence="1">
        <name>Mg(2+)</name>
        <dbReference type="ChEBI" id="CHEBI:18420"/>
    </cofactor>
    <text evidence="1">Binds 1 Mg(2+) ion per subunit.</text>
</comment>
<comment type="pathway">
    <text evidence="1">Cofactor biosynthesis; (R)-pantothenate biosynthesis; (R)-pantoate from 3-methyl-2-oxobutanoate: step 1/2.</text>
</comment>
<comment type="subunit">
    <text evidence="1">Homodecamer; pentamer of dimers.</text>
</comment>
<comment type="subcellular location">
    <subcellularLocation>
        <location evidence="1">Cytoplasm</location>
    </subcellularLocation>
</comment>
<comment type="similarity">
    <text evidence="1">Belongs to the PanB family.</text>
</comment>
<gene>
    <name evidence="1" type="primary">panB</name>
    <name type="ordered locus">Xfasm12_0197</name>
</gene>
<sequence>MSIYTNSKPWTVPALAEAKRNGSKIVMLTAYDAGFARILDANGVDLVLVGDSLGMVVQGHDSTLPVSVHDMVYHTACVARGVRQAMLVVDLPFQADASPERALEAATALLRVGAQMIKIEGAGHKLEVISYLVEREIPVCSHLGLTPQSVLRLGGYKVQGRGEEAGGRLRAEARAAVEAGATLLLLECVPSQLAAQITTDVSVPTIGIGAGAGCDGQVLVLHDLLGLDSGHPRPKFVKDFLAHGGSVAGAVRAYANAVRDGSFPDVEHTYTS</sequence>
<feature type="chain" id="PRO_1000097022" description="3-methyl-2-oxobutanoate hydroxymethyltransferase">
    <location>
        <begin position="1"/>
        <end position="272"/>
    </location>
</feature>
<feature type="active site" description="Proton acceptor" evidence="1">
    <location>
        <position position="187"/>
    </location>
</feature>
<feature type="binding site" evidence="1">
    <location>
        <begin position="51"/>
        <end position="52"/>
    </location>
    <ligand>
        <name>3-methyl-2-oxobutanoate</name>
        <dbReference type="ChEBI" id="CHEBI:11851"/>
    </ligand>
</feature>
<feature type="binding site" evidence="1">
    <location>
        <position position="51"/>
    </location>
    <ligand>
        <name>Mg(2+)</name>
        <dbReference type="ChEBI" id="CHEBI:18420"/>
    </ligand>
</feature>
<feature type="binding site" evidence="1">
    <location>
        <position position="90"/>
    </location>
    <ligand>
        <name>3-methyl-2-oxobutanoate</name>
        <dbReference type="ChEBI" id="CHEBI:11851"/>
    </ligand>
</feature>
<feature type="binding site" evidence="1">
    <location>
        <position position="90"/>
    </location>
    <ligand>
        <name>Mg(2+)</name>
        <dbReference type="ChEBI" id="CHEBI:18420"/>
    </ligand>
</feature>
<feature type="binding site" evidence="1">
    <location>
        <position position="118"/>
    </location>
    <ligand>
        <name>3-methyl-2-oxobutanoate</name>
        <dbReference type="ChEBI" id="CHEBI:11851"/>
    </ligand>
</feature>
<feature type="binding site" evidence="1">
    <location>
        <position position="120"/>
    </location>
    <ligand>
        <name>Mg(2+)</name>
        <dbReference type="ChEBI" id="CHEBI:18420"/>
    </ligand>
</feature>
<organism>
    <name type="scientific">Xylella fastidiosa (strain M12)</name>
    <dbReference type="NCBI Taxonomy" id="405440"/>
    <lineage>
        <taxon>Bacteria</taxon>
        <taxon>Pseudomonadati</taxon>
        <taxon>Pseudomonadota</taxon>
        <taxon>Gammaproteobacteria</taxon>
        <taxon>Lysobacterales</taxon>
        <taxon>Lysobacteraceae</taxon>
        <taxon>Xylella</taxon>
    </lineage>
</organism>
<keyword id="KW-0963">Cytoplasm</keyword>
<keyword id="KW-0460">Magnesium</keyword>
<keyword id="KW-0479">Metal-binding</keyword>
<keyword id="KW-0566">Pantothenate biosynthesis</keyword>
<keyword id="KW-0808">Transferase</keyword>
<accession>B0U1Q2</accession>
<name>PANB_XYLFM</name>
<dbReference type="EC" id="2.1.2.11" evidence="1"/>
<dbReference type="EMBL" id="CP000941">
    <property type="protein sequence ID" value="ACA11230.1"/>
    <property type="molecule type" value="Genomic_DNA"/>
</dbReference>
<dbReference type="RefSeq" id="WP_004086274.1">
    <property type="nucleotide sequence ID" value="NC_010513.1"/>
</dbReference>
<dbReference type="SMR" id="B0U1Q2"/>
<dbReference type="KEGG" id="xfm:Xfasm12_0197"/>
<dbReference type="HOGENOM" id="CLU_036645_1_0_6"/>
<dbReference type="UniPathway" id="UPA00028">
    <property type="reaction ID" value="UER00003"/>
</dbReference>
<dbReference type="GO" id="GO:0005737">
    <property type="term" value="C:cytoplasm"/>
    <property type="evidence" value="ECO:0007669"/>
    <property type="project" value="UniProtKB-SubCell"/>
</dbReference>
<dbReference type="GO" id="GO:0003864">
    <property type="term" value="F:3-methyl-2-oxobutanoate hydroxymethyltransferase activity"/>
    <property type="evidence" value="ECO:0007669"/>
    <property type="project" value="UniProtKB-UniRule"/>
</dbReference>
<dbReference type="GO" id="GO:0000287">
    <property type="term" value="F:magnesium ion binding"/>
    <property type="evidence" value="ECO:0007669"/>
    <property type="project" value="TreeGrafter"/>
</dbReference>
<dbReference type="GO" id="GO:0015940">
    <property type="term" value="P:pantothenate biosynthetic process"/>
    <property type="evidence" value="ECO:0007669"/>
    <property type="project" value="UniProtKB-UniRule"/>
</dbReference>
<dbReference type="CDD" id="cd06557">
    <property type="entry name" value="KPHMT-like"/>
    <property type="match status" value="1"/>
</dbReference>
<dbReference type="FunFam" id="3.20.20.60:FF:000003">
    <property type="entry name" value="3-methyl-2-oxobutanoate hydroxymethyltransferase"/>
    <property type="match status" value="1"/>
</dbReference>
<dbReference type="Gene3D" id="3.20.20.60">
    <property type="entry name" value="Phosphoenolpyruvate-binding domains"/>
    <property type="match status" value="1"/>
</dbReference>
<dbReference type="HAMAP" id="MF_00156">
    <property type="entry name" value="PanB"/>
    <property type="match status" value="1"/>
</dbReference>
<dbReference type="InterPro" id="IPR003700">
    <property type="entry name" value="Pantoate_hydroxy_MeTrfase"/>
</dbReference>
<dbReference type="InterPro" id="IPR015813">
    <property type="entry name" value="Pyrv/PenolPyrv_kinase-like_dom"/>
</dbReference>
<dbReference type="InterPro" id="IPR040442">
    <property type="entry name" value="Pyrv_kinase-like_dom_sf"/>
</dbReference>
<dbReference type="NCBIfam" id="TIGR00222">
    <property type="entry name" value="panB"/>
    <property type="match status" value="1"/>
</dbReference>
<dbReference type="NCBIfam" id="NF001452">
    <property type="entry name" value="PRK00311.1"/>
    <property type="match status" value="1"/>
</dbReference>
<dbReference type="PANTHER" id="PTHR20881">
    <property type="entry name" value="3-METHYL-2-OXOBUTANOATE HYDROXYMETHYLTRANSFERASE"/>
    <property type="match status" value="1"/>
</dbReference>
<dbReference type="PANTHER" id="PTHR20881:SF0">
    <property type="entry name" value="3-METHYL-2-OXOBUTANOATE HYDROXYMETHYLTRANSFERASE"/>
    <property type="match status" value="1"/>
</dbReference>
<dbReference type="Pfam" id="PF02548">
    <property type="entry name" value="Pantoate_transf"/>
    <property type="match status" value="1"/>
</dbReference>
<dbReference type="PIRSF" id="PIRSF000388">
    <property type="entry name" value="Pantoate_hydroxy_MeTrfase"/>
    <property type="match status" value="1"/>
</dbReference>
<dbReference type="SUPFAM" id="SSF51621">
    <property type="entry name" value="Phosphoenolpyruvate/pyruvate domain"/>
    <property type="match status" value="1"/>
</dbReference>